<accession>Q14HX3</accession>
<organism>
    <name type="scientific">Francisella tularensis subsp. tularensis (strain FSC 198)</name>
    <dbReference type="NCBI Taxonomy" id="393115"/>
    <lineage>
        <taxon>Bacteria</taxon>
        <taxon>Pseudomonadati</taxon>
        <taxon>Pseudomonadota</taxon>
        <taxon>Gammaproteobacteria</taxon>
        <taxon>Thiotrichales</taxon>
        <taxon>Francisellaceae</taxon>
        <taxon>Francisella</taxon>
    </lineage>
</organism>
<gene>
    <name evidence="1" type="primary">gpsA</name>
    <name type="ordered locus">FTF0871</name>
</gene>
<name>GPDA_FRAT1</name>
<comment type="function">
    <text evidence="1">Catalyzes the reduction of the glycolytic intermediate dihydroxyacetone phosphate (DHAP) to sn-glycerol 3-phosphate (G3P), the key precursor for phospholipid synthesis.</text>
</comment>
<comment type="catalytic activity">
    <reaction evidence="1">
        <text>sn-glycerol 3-phosphate + NAD(+) = dihydroxyacetone phosphate + NADH + H(+)</text>
        <dbReference type="Rhea" id="RHEA:11092"/>
        <dbReference type="ChEBI" id="CHEBI:15378"/>
        <dbReference type="ChEBI" id="CHEBI:57540"/>
        <dbReference type="ChEBI" id="CHEBI:57597"/>
        <dbReference type="ChEBI" id="CHEBI:57642"/>
        <dbReference type="ChEBI" id="CHEBI:57945"/>
        <dbReference type="EC" id="1.1.1.94"/>
    </reaction>
    <physiologicalReaction direction="right-to-left" evidence="1">
        <dbReference type="Rhea" id="RHEA:11094"/>
    </physiologicalReaction>
</comment>
<comment type="catalytic activity">
    <reaction evidence="1">
        <text>sn-glycerol 3-phosphate + NADP(+) = dihydroxyacetone phosphate + NADPH + H(+)</text>
        <dbReference type="Rhea" id="RHEA:11096"/>
        <dbReference type="ChEBI" id="CHEBI:15378"/>
        <dbReference type="ChEBI" id="CHEBI:57597"/>
        <dbReference type="ChEBI" id="CHEBI:57642"/>
        <dbReference type="ChEBI" id="CHEBI:57783"/>
        <dbReference type="ChEBI" id="CHEBI:58349"/>
        <dbReference type="EC" id="1.1.1.94"/>
    </reaction>
    <physiologicalReaction direction="right-to-left" evidence="1">
        <dbReference type="Rhea" id="RHEA:11098"/>
    </physiologicalReaction>
</comment>
<comment type="pathway">
    <text evidence="1">Membrane lipid metabolism; glycerophospholipid metabolism.</text>
</comment>
<comment type="subcellular location">
    <subcellularLocation>
        <location evidence="1">Cytoplasm</location>
    </subcellularLocation>
</comment>
<comment type="similarity">
    <text evidence="1">Belongs to the NAD-dependent glycerol-3-phosphate dehydrogenase family.</text>
</comment>
<proteinExistence type="inferred from homology"/>
<protein>
    <recommendedName>
        <fullName evidence="1">Glycerol-3-phosphate dehydrogenase [NAD(P)+]</fullName>
        <ecNumber evidence="1">1.1.1.94</ecNumber>
    </recommendedName>
    <alternativeName>
        <fullName evidence="1">NAD(P)(+)-dependent glycerol-3-phosphate dehydrogenase</fullName>
    </alternativeName>
    <alternativeName>
        <fullName evidence="1">NAD(P)H-dependent dihydroxyacetone-phosphate reductase</fullName>
    </alternativeName>
</protein>
<dbReference type="EC" id="1.1.1.94" evidence="1"/>
<dbReference type="EMBL" id="AM286280">
    <property type="protein sequence ID" value="CAL08887.1"/>
    <property type="molecule type" value="Genomic_DNA"/>
</dbReference>
<dbReference type="RefSeq" id="WP_003018393.1">
    <property type="nucleotide sequence ID" value="NC_008245.1"/>
</dbReference>
<dbReference type="SMR" id="Q14HX3"/>
<dbReference type="KEGG" id="ftf:FTF0871"/>
<dbReference type="HOGENOM" id="CLU_033449_0_2_6"/>
<dbReference type="UniPathway" id="UPA00940"/>
<dbReference type="GO" id="GO:0005829">
    <property type="term" value="C:cytosol"/>
    <property type="evidence" value="ECO:0007669"/>
    <property type="project" value="TreeGrafter"/>
</dbReference>
<dbReference type="GO" id="GO:0047952">
    <property type="term" value="F:glycerol-3-phosphate dehydrogenase [NAD(P)+] activity"/>
    <property type="evidence" value="ECO:0007669"/>
    <property type="project" value="UniProtKB-UniRule"/>
</dbReference>
<dbReference type="GO" id="GO:0051287">
    <property type="term" value="F:NAD binding"/>
    <property type="evidence" value="ECO:0007669"/>
    <property type="project" value="InterPro"/>
</dbReference>
<dbReference type="GO" id="GO:0005975">
    <property type="term" value="P:carbohydrate metabolic process"/>
    <property type="evidence" value="ECO:0007669"/>
    <property type="project" value="InterPro"/>
</dbReference>
<dbReference type="GO" id="GO:0046167">
    <property type="term" value="P:glycerol-3-phosphate biosynthetic process"/>
    <property type="evidence" value="ECO:0007669"/>
    <property type="project" value="UniProtKB-UniRule"/>
</dbReference>
<dbReference type="GO" id="GO:0046168">
    <property type="term" value="P:glycerol-3-phosphate catabolic process"/>
    <property type="evidence" value="ECO:0007669"/>
    <property type="project" value="InterPro"/>
</dbReference>
<dbReference type="GO" id="GO:0046474">
    <property type="term" value="P:glycerophospholipid biosynthetic process"/>
    <property type="evidence" value="ECO:0007669"/>
    <property type="project" value="TreeGrafter"/>
</dbReference>
<dbReference type="FunFam" id="1.10.1040.10:FF:000001">
    <property type="entry name" value="Glycerol-3-phosphate dehydrogenase [NAD(P)+]"/>
    <property type="match status" value="1"/>
</dbReference>
<dbReference type="FunFam" id="3.40.50.720:FF:000019">
    <property type="entry name" value="Glycerol-3-phosphate dehydrogenase [NAD(P)+]"/>
    <property type="match status" value="1"/>
</dbReference>
<dbReference type="Gene3D" id="1.10.1040.10">
    <property type="entry name" value="N-(1-d-carboxylethyl)-l-norvaline Dehydrogenase, domain 2"/>
    <property type="match status" value="1"/>
</dbReference>
<dbReference type="Gene3D" id="3.40.50.720">
    <property type="entry name" value="NAD(P)-binding Rossmann-like Domain"/>
    <property type="match status" value="1"/>
</dbReference>
<dbReference type="HAMAP" id="MF_00394">
    <property type="entry name" value="NAD_Glyc3P_dehydrog"/>
    <property type="match status" value="1"/>
</dbReference>
<dbReference type="InterPro" id="IPR008927">
    <property type="entry name" value="6-PGluconate_DH-like_C_sf"/>
</dbReference>
<dbReference type="InterPro" id="IPR013328">
    <property type="entry name" value="6PGD_dom2"/>
</dbReference>
<dbReference type="InterPro" id="IPR006168">
    <property type="entry name" value="G3P_DH_NAD-dep"/>
</dbReference>
<dbReference type="InterPro" id="IPR006109">
    <property type="entry name" value="G3P_DH_NAD-dep_C"/>
</dbReference>
<dbReference type="InterPro" id="IPR011128">
    <property type="entry name" value="G3P_DH_NAD-dep_N"/>
</dbReference>
<dbReference type="InterPro" id="IPR036291">
    <property type="entry name" value="NAD(P)-bd_dom_sf"/>
</dbReference>
<dbReference type="NCBIfam" id="NF000940">
    <property type="entry name" value="PRK00094.1-2"/>
    <property type="match status" value="1"/>
</dbReference>
<dbReference type="NCBIfam" id="NF000942">
    <property type="entry name" value="PRK00094.1-4"/>
    <property type="match status" value="1"/>
</dbReference>
<dbReference type="PANTHER" id="PTHR11728">
    <property type="entry name" value="GLYCEROL-3-PHOSPHATE DEHYDROGENASE"/>
    <property type="match status" value="1"/>
</dbReference>
<dbReference type="PANTHER" id="PTHR11728:SF1">
    <property type="entry name" value="GLYCEROL-3-PHOSPHATE DEHYDROGENASE [NAD(+)] 2, CHLOROPLASTIC"/>
    <property type="match status" value="1"/>
</dbReference>
<dbReference type="Pfam" id="PF07479">
    <property type="entry name" value="NAD_Gly3P_dh_C"/>
    <property type="match status" value="1"/>
</dbReference>
<dbReference type="Pfam" id="PF01210">
    <property type="entry name" value="NAD_Gly3P_dh_N"/>
    <property type="match status" value="1"/>
</dbReference>
<dbReference type="PIRSF" id="PIRSF000114">
    <property type="entry name" value="Glycerol-3-P_dh"/>
    <property type="match status" value="1"/>
</dbReference>
<dbReference type="PRINTS" id="PR00077">
    <property type="entry name" value="GPDHDRGNASE"/>
</dbReference>
<dbReference type="SUPFAM" id="SSF48179">
    <property type="entry name" value="6-phosphogluconate dehydrogenase C-terminal domain-like"/>
    <property type="match status" value="1"/>
</dbReference>
<dbReference type="SUPFAM" id="SSF51735">
    <property type="entry name" value="NAD(P)-binding Rossmann-fold domains"/>
    <property type="match status" value="1"/>
</dbReference>
<dbReference type="PROSITE" id="PS00957">
    <property type="entry name" value="NAD_G3PDH"/>
    <property type="match status" value="1"/>
</dbReference>
<keyword id="KW-0963">Cytoplasm</keyword>
<keyword id="KW-0444">Lipid biosynthesis</keyword>
<keyword id="KW-0443">Lipid metabolism</keyword>
<keyword id="KW-0520">NAD</keyword>
<keyword id="KW-0521">NADP</keyword>
<keyword id="KW-0547">Nucleotide-binding</keyword>
<keyword id="KW-0560">Oxidoreductase</keyword>
<keyword id="KW-0594">Phospholipid biosynthesis</keyword>
<keyword id="KW-1208">Phospholipid metabolism</keyword>
<feature type="chain" id="PRO_1000049504" description="Glycerol-3-phosphate dehydrogenase [NAD(P)+]">
    <location>
        <begin position="1"/>
        <end position="332"/>
    </location>
</feature>
<feature type="active site" description="Proton acceptor" evidence="1">
    <location>
        <position position="191"/>
    </location>
</feature>
<feature type="binding site" evidence="1">
    <location>
        <position position="13"/>
    </location>
    <ligand>
        <name>NADPH</name>
        <dbReference type="ChEBI" id="CHEBI:57783"/>
    </ligand>
</feature>
<feature type="binding site" evidence="1">
    <location>
        <position position="34"/>
    </location>
    <ligand>
        <name>NADPH</name>
        <dbReference type="ChEBI" id="CHEBI:57783"/>
    </ligand>
</feature>
<feature type="binding site" evidence="1">
    <location>
        <position position="108"/>
    </location>
    <ligand>
        <name>NADPH</name>
        <dbReference type="ChEBI" id="CHEBI:57783"/>
    </ligand>
</feature>
<feature type="binding site" evidence="1">
    <location>
        <position position="108"/>
    </location>
    <ligand>
        <name>sn-glycerol 3-phosphate</name>
        <dbReference type="ChEBI" id="CHEBI:57597"/>
    </ligand>
</feature>
<feature type="binding site" evidence="1">
    <location>
        <position position="136"/>
    </location>
    <ligand>
        <name>sn-glycerol 3-phosphate</name>
        <dbReference type="ChEBI" id="CHEBI:57597"/>
    </ligand>
</feature>
<feature type="binding site" evidence="1">
    <location>
        <position position="138"/>
    </location>
    <ligand>
        <name>sn-glycerol 3-phosphate</name>
        <dbReference type="ChEBI" id="CHEBI:57597"/>
    </ligand>
</feature>
<feature type="binding site" evidence="1">
    <location>
        <position position="140"/>
    </location>
    <ligand>
        <name>NADPH</name>
        <dbReference type="ChEBI" id="CHEBI:57783"/>
    </ligand>
</feature>
<feature type="binding site" evidence="1">
    <location>
        <position position="191"/>
    </location>
    <ligand>
        <name>sn-glycerol 3-phosphate</name>
        <dbReference type="ChEBI" id="CHEBI:57597"/>
    </ligand>
</feature>
<feature type="binding site" evidence="1">
    <location>
        <position position="244"/>
    </location>
    <ligand>
        <name>sn-glycerol 3-phosphate</name>
        <dbReference type="ChEBI" id="CHEBI:57597"/>
    </ligand>
</feature>
<feature type="binding site" evidence="1">
    <location>
        <position position="254"/>
    </location>
    <ligand>
        <name>sn-glycerol 3-phosphate</name>
        <dbReference type="ChEBI" id="CHEBI:57597"/>
    </ligand>
</feature>
<feature type="binding site" evidence="1">
    <location>
        <position position="255"/>
    </location>
    <ligand>
        <name>NADPH</name>
        <dbReference type="ChEBI" id="CHEBI:57783"/>
    </ligand>
</feature>
<feature type="binding site" evidence="1">
    <location>
        <position position="255"/>
    </location>
    <ligand>
        <name>sn-glycerol 3-phosphate</name>
        <dbReference type="ChEBI" id="CHEBI:57597"/>
    </ligand>
</feature>
<feature type="binding site" evidence="1">
    <location>
        <position position="256"/>
    </location>
    <ligand>
        <name>sn-glycerol 3-phosphate</name>
        <dbReference type="ChEBI" id="CHEBI:57597"/>
    </ligand>
</feature>
<feature type="binding site" evidence="1">
    <location>
        <position position="279"/>
    </location>
    <ligand>
        <name>NADPH</name>
        <dbReference type="ChEBI" id="CHEBI:57783"/>
    </ligand>
</feature>
<feature type="binding site" evidence="1">
    <location>
        <position position="281"/>
    </location>
    <ligand>
        <name>NADPH</name>
        <dbReference type="ChEBI" id="CHEBI:57783"/>
    </ligand>
</feature>
<reference key="1">
    <citation type="journal article" date="2007" name="PLoS ONE">
        <title>Genome sequencing shows that European isolates of Francisella tularensis subspecies tularensis are almost identical to US laboratory strain Schu S4.</title>
        <authorList>
            <person name="Chaudhuri R.R."/>
            <person name="Ren C.-P."/>
            <person name="Desmond L."/>
            <person name="Vincent G.A."/>
            <person name="Silman N.J."/>
            <person name="Brehm J.K."/>
            <person name="Elmore M.J."/>
            <person name="Hudson M.J."/>
            <person name="Forsman M."/>
            <person name="Isherwood K.E."/>
            <person name="Gurycova D."/>
            <person name="Minton N.P."/>
            <person name="Titball R.W."/>
            <person name="Pallen M.J."/>
            <person name="Vipond R."/>
        </authorList>
    </citation>
    <scope>NUCLEOTIDE SEQUENCE [LARGE SCALE GENOMIC DNA]</scope>
    <source>
        <strain>FSC 198</strain>
    </source>
</reference>
<evidence type="ECO:0000255" key="1">
    <source>
        <dbReference type="HAMAP-Rule" id="MF_00394"/>
    </source>
</evidence>
<sequence>MQKNILVLGAGAWGTALALQLAYRGHNVRINSWKAEHNEQMLKDNNNHKYLPSIEKFPSRLKAIQDWQANIIEFDSILVATPSSGFKNTILELKECILPQQNIISATKGFCHDSYALLSEIAEDILPTTKFALLTGPSFAKELANQLPTAVVVASKDINYARYVQELFSNENFRCYTTTDIIGAQVGGAVKNVLAITAGIAAGMEFGVNAHAALITRGLAEIKKLGLKLGANSETFIGLSCLGDLLLTCSDNQSRNRRFGLYLGQGMTIQQALKEVNNVVEGYFTAKAVYNLAKKHNVEMPLVFATYRILYEAADPRDIVKELMTRQLKNEN</sequence>